<dbReference type="EMBL" id="DQ440486">
    <property type="protein sequence ID" value="ABF18519.1"/>
    <property type="molecule type" value="mRNA"/>
</dbReference>
<dbReference type="EMBL" id="CH477454">
    <property type="protein sequence ID" value="EAT40648.1"/>
    <property type="molecule type" value="Genomic_DNA"/>
</dbReference>
<dbReference type="FunCoup" id="Q1HQF8">
    <property type="interactions" value="583"/>
</dbReference>
<dbReference type="STRING" id="7159.Q1HQF8"/>
<dbReference type="PaxDb" id="7159-AAEL007634-PA"/>
<dbReference type="EnsemblMetazoa" id="AAEL007634-RA">
    <property type="protein sequence ID" value="AAEL007634-PA"/>
    <property type="gene ID" value="AAEL007634"/>
</dbReference>
<dbReference type="GeneID" id="5569432"/>
<dbReference type="KEGG" id="aag:5569432"/>
<dbReference type="VEuPathDB" id="VectorBase:AAEL007634"/>
<dbReference type="eggNOG" id="KOG4615">
    <property type="taxonomic scope" value="Eukaryota"/>
</dbReference>
<dbReference type="HOGENOM" id="CLU_109648_2_0_1"/>
<dbReference type="InParanoid" id="Q1HQF8"/>
<dbReference type="OMA" id="ITIYYMN"/>
<dbReference type="OrthoDB" id="1111004at2759"/>
<dbReference type="PhylomeDB" id="Q1HQF8"/>
<dbReference type="Proteomes" id="UP000008820">
    <property type="component" value="Chromosome 3"/>
</dbReference>
<dbReference type="Proteomes" id="UP000682892">
    <property type="component" value="Chromosome 2"/>
</dbReference>
<dbReference type="GO" id="GO:0005615">
    <property type="term" value="C:extracellular space"/>
    <property type="evidence" value="ECO:0000314"/>
    <property type="project" value="UniProtKB"/>
</dbReference>
<dbReference type="GO" id="GO:0016020">
    <property type="term" value="C:membrane"/>
    <property type="evidence" value="ECO:0007669"/>
    <property type="project" value="UniProtKB-SubCell"/>
</dbReference>
<dbReference type="InterPro" id="IPR018614">
    <property type="entry name" value="KRTCAP2"/>
</dbReference>
<dbReference type="PANTHER" id="PTHR32001">
    <property type="entry name" value="KERATINOCYTE-ASSOCIATED PROTEIN 2"/>
    <property type="match status" value="1"/>
</dbReference>
<dbReference type="PANTHER" id="PTHR32001:SF1">
    <property type="entry name" value="KERATINOCYTE-ASSOCIATED PROTEIN 2"/>
    <property type="match status" value="1"/>
</dbReference>
<dbReference type="Pfam" id="PF09775">
    <property type="entry name" value="Keratin_assoc"/>
    <property type="match status" value="1"/>
</dbReference>
<organism>
    <name type="scientific">Aedes aegypti</name>
    <name type="common">Yellowfever mosquito</name>
    <name type="synonym">Culex aegypti</name>
    <dbReference type="NCBI Taxonomy" id="7159"/>
    <lineage>
        <taxon>Eukaryota</taxon>
        <taxon>Metazoa</taxon>
        <taxon>Ecdysozoa</taxon>
        <taxon>Arthropoda</taxon>
        <taxon>Hexapoda</taxon>
        <taxon>Insecta</taxon>
        <taxon>Pterygota</taxon>
        <taxon>Neoptera</taxon>
        <taxon>Endopterygota</taxon>
        <taxon>Diptera</taxon>
        <taxon>Nematocera</taxon>
        <taxon>Culicoidea</taxon>
        <taxon>Culicidae</taxon>
        <taxon>Culicinae</taxon>
        <taxon>Aedini</taxon>
        <taxon>Aedes</taxon>
        <taxon>Stegomyia</taxon>
    </lineage>
</organism>
<name>KTAP2_AEDAE</name>
<sequence length="132" mass="14126">MAVPTSVSLVLASVTAVLIFSAMQMYKPLIASSQMATVFGGFLGSWLFILSLTAVSNLEAVVLGKGFQAKLFPEVAFCLIGSLFACGMVHRVCATTCILFSVAALYYINRISQKVHNAPVPVDTYAGKKKKK</sequence>
<feature type="chain" id="PRO_0000327901" description="Protein KRTCAP2 homolog">
    <location>
        <begin position="1"/>
        <end position="132"/>
    </location>
</feature>
<feature type="transmembrane region" description="Helical" evidence="3">
    <location>
        <begin position="1"/>
        <end position="21"/>
    </location>
</feature>
<feature type="transmembrane region" description="Helical" evidence="3">
    <location>
        <begin position="35"/>
        <end position="55"/>
    </location>
</feature>
<feature type="transmembrane region" description="Helical" evidence="3">
    <location>
        <begin position="69"/>
        <end position="89"/>
    </location>
</feature>
<feature type="transmembrane region" description="Helical" evidence="3">
    <location>
        <begin position="92"/>
        <end position="109"/>
    </location>
</feature>
<keyword id="KW-0472">Membrane</keyword>
<keyword id="KW-1185">Reference proteome</keyword>
<keyword id="KW-0812">Transmembrane</keyword>
<keyword id="KW-1133">Transmembrane helix</keyword>
<reference key="1">
    <citation type="journal article" date="2007" name="BMC Genomics">
        <title>An annotated catalogue of salivary gland transcripts in the adult female mosquito, Aedes aegypti.</title>
        <authorList>
            <person name="Ribeiro J.M.C."/>
            <person name="Arca B."/>
            <person name="Lombardo F."/>
            <person name="Calvo E."/>
            <person name="Phan V.M."/>
            <person name="Chandra P.K."/>
            <person name="Wikel S.K."/>
        </authorList>
    </citation>
    <scope>NUCLEOTIDE SEQUENCE [LARGE SCALE MRNA]</scope>
    <source>
        <tissue>Salivary gland</tissue>
    </source>
</reference>
<reference key="2">
    <citation type="journal article" date="2007" name="Science">
        <title>Genome sequence of Aedes aegypti, a major arbovirus vector.</title>
        <authorList>
            <person name="Nene V."/>
            <person name="Wortman J.R."/>
            <person name="Lawson D."/>
            <person name="Haas B.J."/>
            <person name="Kodira C.D."/>
            <person name="Tu Z.J."/>
            <person name="Loftus B.J."/>
            <person name="Xi Z."/>
            <person name="Megy K."/>
            <person name="Grabherr M."/>
            <person name="Ren Q."/>
            <person name="Zdobnov E.M."/>
            <person name="Lobo N.F."/>
            <person name="Campbell K.S."/>
            <person name="Brown S.E."/>
            <person name="Bonaldo M.F."/>
            <person name="Zhu J."/>
            <person name="Sinkins S.P."/>
            <person name="Hogenkamp D.G."/>
            <person name="Amedeo P."/>
            <person name="Arensburger P."/>
            <person name="Atkinson P.W."/>
            <person name="Bidwell S.L."/>
            <person name="Biedler J."/>
            <person name="Birney E."/>
            <person name="Bruggner R.V."/>
            <person name="Costas J."/>
            <person name="Coy M.R."/>
            <person name="Crabtree J."/>
            <person name="Crawford M."/>
            <person name="DeBruyn B."/>
            <person name="DeCaprio D."/>
            <person name="Eiglmeier K."/>
            <person name="Eisenstadt E."/>
            <person name="El-Dorry H."/>
            <person name="Gelbart W.M."/>
            <person name="Gomes S.L."/>
            <person name="Hammond M."/>
            <person name="Hannick L.I."/>
            <person name="Hogan J.R."/>
            <person name="Holmes M.H."/>
            <person name="Jaffe D."/>
            <person name="Johnston S.J."/>
            <person name="Kennedy R.C."/>
            <person name="Koo H."/>
            <person name="Kravitz S."/>
            <person name="Kriventseva E.V."/>
            <person name="Kulp D."/>
            <person name="Labutti K."/>
            <person name="Lee E."/>
            <person name="Li S."/>
            <person name="Lovin D.D."/>
            <person name="Mao C."/>
            <person name="Mauceli E."/>
            <person name="Menck C.F."/>
            <person name="Miller J.R."/>
            <person name="Montgomery P."/>
            <person name="Mori A."/>
            <person name="Nascimento A.L."/>
            <person name="Naveira H.F."/>
            <person name="Nusbaum C."/>
            <person name="O'Leary S.B."/>
            <person name="Orvis J."/>
            <person name="Pertea M."/>
            <person name="Quesneville H."/>
            <person name="Reidenbach K.R."/>
            <person name="Rogers Y.-H.C."/>
            <person name="Roth C.W."/>
            <person name="Schneider J.R."/>
            <person name="Schatz M."/>
            <person name="Shumway M."/>
            <person name="Stanke M."/>
            <person name="Stinson E.O."/>
            <person name="Tubio J.M.C."/>
            <person name="Vanzee J.P."/>
            <person name="Verjovski-Almeida S."/>
            <person name="Werner D."/>
            <person name="White O.R."/>
            <person name="Wyder S."/>
            <person name="Zeng Q."/>
            <person name="Zhao Q."/>
            <person name="Zhao Y."/>
            <person name="Hill C.A."/>
            <person name="Raikhel A.S."/>
            <person name="Soares M.B."/>
            <person name="Knudson D.L."/>
            <person name="Lee N.H."/>
            <person name="Galagan J."/>
            <person name="Salzberg S.L."/>
            <person name="Paulsen I.T."/>
            <person name="Dimopoulos G."/>
            <person name="Collins F.H."/>
            <person name="Bruce B."/>
            <person name="Fraser-Liggett C.M."/>
            <person name="Severson D.W."/>
        </authorList>
    </citation>
    <scope>NUCLEOTIDE SEQUENCE [LARGE SCALE GENOMIC DNA]</scope>
    <source>
        <strain>LVPib12</strain>
    </source>
</reference>
<accession>Q1HQF8</accession>
<evidence type="ECO:0000250" key="1">
    <source>
        <dbReference type="UniProtKB" id="P86229"/>
    </source>
</evidence>
<evidence type="ECO:0000250" key="2">
    <source>
        <dbReference type="UniProtKB" id="Q8N6L1"/>
    </source>
</evidence>
<evidence type="ECO:0000255" key="3"/>
<evidence type="ECO:0000305" key="4"/>
<gene>
    <name type="ORF">AAEL007634</name>
</gene>
<proteinExistence type="evidence at transcript level"/>
<comment type="function">
    <text evidence="2">Subunit of the oligosaccharyl transferase (OST) complex that catalyzes the initial transfer of a defined glycan (Glc(3)Man(9)GlcNAc(2) in eukaryotes) from the lipid carrier dolichol-pyrophosphate to an asparagine residue within an Asn-X-Ser/Thr consensus motif in nascent polypeptide chains, the first step in protein N-glycosylation. N-glycosylation occurs cotranslationally and the complex associates with the Sec61 complex at the channel-forming translocon complex that mediates protein translocation across the endoplasmic reticulum (ER). All subunits are required for a maximal enzyme activity.</text>
</comment>
<comment type="subunit">
    <text evidence="1">Component of the oligosaccharyltransferase (OST) complex.</text>
</comment>
<comment type="subcellular location">
    <subcellularLocation>
        <location evidence="4">Membrane</location>
        <topology evidence="4">Multi-pass membrane protein</topology>
    </subcellularLocation>
</comment>
<comment type="similarity">
    <text evidence="4">Belongs to the KRTCAP2 family.</text>
</comment>
<protein>
    <recommendedName>
        <fullName>Protein KRTCAP2 homolog</fullName>
    </recommendedName>
    <alternativeName>
        <fullName>Dolichyl-diphosphooligosaccharide--protein glycosyltransferase subunit KCP2</fullName>
        <shortName>Oligosaccharyl transferase subunit KCP2</shortName>
    </alternativeName>
</protein>